<accession>Q9UM22</accession>
<accession>A8K4C0</accession>
<accession>C9JYS3</accession>
<accession>Q06BL0</accession>
<accession>Q99M77</accession>
<organism>
    <name type="scientific">Homo sapiens</name>
    <name type="common">Human</name>
    <dbReference type="NCBI Taxonomy" id="9606"/>
    <lineage>
        <taxon>Eukaryota</taxon>
        <taxon>Metazoa</taxon>
        <taxon>Chordata</taxon>
        <taxon>Craniata</taxon>
        <taxon>Vertebrata</taxon>
        <taxon>Euteleostomi</taxon>
        <taxon>Mammalia</taxon>
        <taxon>Eutheria</taxon>
        <taxon>Euarchontoglires</taxon>
        <taxon>Primates</taxon>
        <taxon>Haplorrhini</taxon>
        <taxon>Catarrhini</taxon>
        <taxon>Hominidae</taxon>
        <taxon>Homo</taxon>
    </lineage>
</organism>
<keyword id="KW-0002">3D-structure</keyword>
<keyword id="KW-0025">Alternative splicing</keyword>
<keyword id="KW-1015">Disulfide bond</keyword>
<keyword id="KW-0325">Glycoprotein</keyword>
<keyword id="KW-0446">Lipid-binding</keyword>
<keyword id="KW-0458">Lysosome</keyword>
<keyword id="KW-1267">Proteomics identification</keyword>
<keyword id="KW-1185">Reference proteome</keyword>
<keyword id="KW-0964">Secreted</keyword>
<keyword id="KW-0732">Signal</keyword>
<comment type="function">
    <text evidence="5">Binds anionic lipids and gangliosides at acidic pH.</text>
</comment>
<comment type="subunit">
    <text evidence="5">Homodimer.</text>
</comment>
<comment type="interaction">
    <interactant intactId="EBI-946972">
        <id>Q9UM22</id>
    </interactant>
    <interactant intactId="EBI-10173507">
        <id>Q6UY14-3</id>
        <label>ADAMTSL4</label>
    </interactant>
    <organismsDiffer>false</organismsDiffer>
    <experiments>3</experiments>
</comment>
<comment type="interaction">
    <interactant intactId="EBI-946972">
        <id>Q9UM22</id>
    </interactant>
    <interactant intactId="EBI-744366">
        <id>Q96KQ7</id>
        <label>EHMT2</label>
    </interactant>
    <organismsDiffer>false</organismsDiffer>
    <experiments>3</experiments>
</comment>
<comment type="interaction">
    <interactant intactId="EBI-946972">
        <id>Q9UM22</id>
    </interactant>
    <interactant intactId="EBI-740785">
        <id>P49639</id>
        <label>HOXA1</label>
    </interactant>
    <organismsDiffer>false</organismsDiffer>
    <experiments>3</experiments>
</comment>
<comment type="interaction">
    <interactant intactId="EBI-946972">
        <id>Q9UM22</id>
    </interactant>
    <interactant intactId="EBI-947015">
        <id>P24592</id>
        <label>IGFBP6</label>
    </interactant>
    <organismsDiffer>false</organismsDiffer>
    <experiments>3</experiments>
</comment>
<comment type="interaction">
    <interactant intactId="EBI-946972">
        <id>Q9UM22</id>
    </interactant>
    <interactant intactId="EBI-948001">
        <id>Q15323</id>
        <label>KRT31</label>
    </interactant>
    <organismsDiffer>false</organismsDiffer>
    <experiments>3</experiments>
</comment>
<comment type="interaction">
    <interactant intactId="EBI-946972">
        <id>Q9UM22</id>
    </interactant>
    <interactant intactId="EBI-1047093">
        <id>O76011</id>
        <label>KRT34</label>
    </interactant>
    <organismsDiffer>false</organismsDiffer>
    <experiments>3</experiments>
</comment>
<comment type="interaction">
    <interactant intactId="EBI-946972">
        <id>Q9UM22</id>
    </interactant>
    <interactant intactId="EBI-10171774">
        <id>P60410</id>
        <label>KRTAP10-8</label>
    </interactant>
    <organismsDiffer>false</organismsDiffer>
    <experiments>3</experiments>
</comment>
<comment type="interaction">
    <interactant intactId="EBI-946972">
        <id>Q9UM22</id>
    </interactant>
    <interactant intactId="EBI-11953846">
        <id>Q52LG2</id>
        <label>KRTAP13-2</label>
    </interactant>
    <organismsDiffer>false</organismsDiffer>
    <experiments>3</experiments>
</comment>
<comment type="interaction">
    <interactant intactId="EBI-946972">
        <id>Q9UM22</id>
    </interactant>
    <interactant intactId="EBI-10302392">
        <id>Q9BYQ6</id>
        <label>KRTAP4-11</label>
    </interactant>
    <organismsDiffer>false</organismsDiffer>
    <experiments>3</experiments>
</comment>
<comment type="interaction">
    <interactant intactId="EBI-946972">
        <id>Q9UM22</id>
    </interactant>
    <interactant intactId="EBI-11339910">
        <id>Q8IYS1</id>
        <label>PM20D2</label>
    </interactant>
    <organismsDiffer>false</organismsDiffer>
    <experiments>3</experiments>
</comment>
<comment type="interaction">
    <interactant intactId="EBI-946972">
        <id>Q9UM22</id>
    </interactant>
    <interactant intactId="EBI-949753">
        <id>Q63HR2</id>
        <label>TNS2</label>
    </interactant>
    <organismsDiffer>false</organismsDiffer>
    <experiments>3</experiments>
</comment>
<comment type="interaction">
    <interactant intactId="EBI-946972">
        <id>Q9UM22</id>
    </interactant>
    <interactant intactId="EBI-742327">
        <id>Q15654</id>
        <label>TRIP6</label>
    </interactant>
    <organismsDiffer>false</organismsDiffer>
    <experiments>3</experiments>
</comment>
<comment type="subcellular location">
    <subcellularLocation>
        <location evidence="5">Lysosome lumen</location>
    </subcellularLocation>
    <subcellularLocation>
        <location evidence="5">Secreted</location>
    </subcellularLocation>
    <text evidence="5">Lysosomal and also secreted.</text>
</comment>
<comment type="alternative products">
    <event type="alternative splicing"/>
    <isoform>
        <id>Q9UM22-1</id>
        <name>1</name>
        <sequence type="displayed"/>
    </isoform>
    <isoform>
        <id>Q9UM22-2</id>
        <name>2</name>
        <sequence type="described" ref="VSP_031976"/>
    </isoform>
    <isoform>
        <id>Q9UM22-3</id>
        <name>3</name>
        <sequence type="described" ref="VSP_046829"/>
    </isoform>
</comment>
<comment type="tissue specificity">
    <text evidence="3">Ubiquitous. Detected in brain, heart, skeletal muscle, kidney, testis, ovary and prostate.</text>
</comment>
<comment type="PTM">
    <text evidence="1">N-glycosylated; the glycan contains mannose-6-phosphate moieties.</text>
</comment>
<comment type="similarity">
    <text evidence="9">Belongs to the ependymin family.</text>
</comment>
<comment type="sequence caution" evidence="9">
    <conflict type="erroneous initiation">
        <sequence resource="EMBL-CDS" id="AAH00686"/>
    </conflict>
</comment>
<comment type="sequence caution" evidence="9">
    <conflict type="erroneous initiation">
        <sequence resource="EMBL-CDS" id="CAB60269"/>
    </conflict>
</comment>
<protein>
    <recommendedName>
        <fullName>Mammalian ependymin-related protein 1</fullName>
        <shortName evidence="6">MERP-1</shortName>
    </recommendedName>
    <alternativeName>
        <fullName>Upregulated in colorectal cancer gene 1 protein</fullName>
    </alternativeName>
</protein>
<name>EPDR1_HUMAN</name>
<reference key="1">
    <citation type="journal article" date="2001" name="DNA Cell Biol.">
        <title>Identification and characterization of a novel family of mammalian ependymin-related proteins (MERPs) in hematopoietic, nonhematopoietic, and malignant tissues.</title>
        <authorList>
            <person name="Apostolopoulos J."/>
            <person name="Sparrow R.L."/>
            <person name="McLeod J.L."/>
            <person name="Collier F.M."/>
            <person name="Darcy P.K."/>
            <person name="Slater H.R."/>
            <person name="Ngu C."/>
            <person name="Gregorio-King C.C."/>
            <person name="Kirkland M.A."/>
        </authorList>
    </citation>
    <scope>NUCLEOTIDE SEQUENCE [GENOMIC DNA / MRNA] (ISOFORM 1)</scope>
    <scope>TISSUE SPECIFICITY</scope>
</reference>
<reference key="2">
    <citation type="submission" date="2006-08" db="EMBL/GenBank/DDBJ databases">
        <title>Characterization of mammalian ependymin proteins.</title>
        <authorList>
            <person name="Gregorio-King C.C."/>
            <person name="Collier F.M."/>
            <person name="Elliott K.L."/>
            <person name="Kirkland M.A."/>
        </authorList>
    </citation>
    <scope>NUCLEOTIDE SEQUENCE [MRNA] (ISOFORM 2)</scope>
</reference>
<reference key="3">
    <citation type="journal article" date="2004" name="Nat. Genet.">
        <title>Complete sequencing and characterization of 21,243 full-length human cDNAs.</title>
        <authorList>
            <person name="Ota T."/>
            <person name="Suzuki Y."/>
            <person name="Nishikawa T."/>
            <person name="Otsuki T."/>
            <person name="Sugiyama T."/>
            <person name="Irie R."/>
            <person name="Wakamatsu A."/>
            <person name="Hayashi K."/>
            <person name="Sato H."/>
            <person name="Nagai K."/>
            <person name="Kimura K."/>
            <person name="Makita H."/>
            <person name="Sekine M."/>
            <person name="Obayashi M."/>
            <person name="Nishi T."/>
            <person name="Shibahara T."/>
            <person name="Tanaka T."/>
            <person name="Ishii S."/>
            <person name="Yamamoto J."/>
            <person name="Saito K."/>
            <person name="Kawai Y."/>
            <person name="Isono Y."/>
            <person name="Nakamura Y."/>
            <person name="Nagahari K."/>
            <person name="Murakami K."/>
            <person name="Yasuda T."/>
            <person name="Iwayanagi T."/>
            <person name="Wagatsuma M."/>
            <person name="Shiratori A."/>
            <person name="Sudo H."/>
            <person name="Hosoiri T."/>
            <person name="Kaku Y."/>
            <person name="Kodaira H."/>
            <person name="Kondo H."/>
            <person name="Sugawara M."/>
            <person name="Takahashi M."/>
            <person name="Kanda K."/>
            <person name="Yokoi T."/>
            <person name="Furuya T."/>
            <person name="Kikkawa E."/>
            <person name="Omura Y."/>
            <person name="Abe K."/>
            <person name="Kamihara K."/>
            <person name="Katsuta N."/>
            <person name="Sato K."/>
            <person name="Tanikawa M."/>
            <person name="Yamazaki M."/>
            <person name="Ninomiya K."/>
            <person name="Ishibashi T."/>
            <person name="Yamashita H."/>
            <person name="Murakawa K."/>
            <person name="Fujimori K."/>
            <person name="Tanai H."/>
            <person name="Kimata M."/>
            <person name="Watanabe M."/>
            <person name="Hiraoka S."/>
            <person name="Chiba Y."/>
            <person name="Ishida S."/>
            <person name="Ono Y."/>
            <person name="Takiguchi S."/>
            <person name="Watanabe S."/>
            <person name="Yosida M."/>
            <person name="Hotuta T."/>
            <person name="Kusano J."/>
            <person name="Kanehori K."/>
            <person name="Takahashi-Fujii A."/>
            <person name="Hara H."/>
            <person name="Tanase T.-O."/>
            <person name="Nomura Y."/>
            <person name="Togiya S."/>
            <person name="Komai F."/>
            <person name="Hara R."/>
            <person name="Takeuchi K."/>
            <person name="Arita M."/>
            <person name="Imose N."/>
            <person name="Musashino K."/>
            <person name="Yuuki H."/>
            <person name="Oshima A."/>
            <person name="Sasaki N."/>
            <person name="Aotsuka S."/>
            <person name="Yoshikawa Y."/>
            <person name="Matsunawa H."/>
            <person name="Ichihara T."/>
            <person name="Shiohata N."/>
            <person name="Sano S."/>
            <person name="Moriya S."/>
            <person name="Momiyama H."/>
            <person name="Satoh N."/>
            <person name="Takami S."/>
            <person name="Terashima Y."/>
            <person name="Suzuki O."/>
            <person name="Nakagawa S."/>
            <person name="Senoh A."/>
            <person name="Mizoguchi H."/>
            <person name="Goto Y."/>
            <person name="Shimizu F."/>
            <person name="Wakebe H."/>
            <person name="Hishigaki H."/>
            <person name="Watanabe T."/>
            <person name="Sugiyama A."/>
            <person name="Takemoto M."/>
            <person name="Kawakami B."/>
            <person name="Yamazaki M."/>
            <person name="Watanabe K."/>
            <person name="Kumagai A."/>
            <person name="Itakura S."/>
            <person name="Fukuzumi Y."/>
            <person name="Fujimori Y."/>
            <person name="Komiyama M."/>
            <person name="Tashiro H."/>
            <person name="Tanigami A."/>
            <person name="Fujiwara T."/>
            <person name="Ono T."/>
            <person name="Yamada K."/>
            <person name="Fujii Y."/>
            <person name="Ozaki K."/>
            <person name="Hirao M."/>
            <person name="Ohmori Y."/>
            <person name="Kawabata A."/>
            <person name="Hikiji T."/>
            <person name="Kobatake N."/>
            <person name="Inagaki H."/>
            <person name="Ikema Y."/>
            <person name="Okamoto S."/>
            <person name="Okitani R."/>
            <person name="Kawakami T."/>
            <person name="Noguchi S."/>
            <person name="Itoh T."/>
            <person name="Shigeta K."/>
            <person name="Senba T."/>
            <person name="Matsumura K."/>
            <person name="Nakajima Y."/>
            <person name="Mizuno T."/>
            <person name="Morinaga M."/>
            <person name="Sasaki M."/>
            <person name="Togashi T."/>
            <person name="Oyama M."/>
            <person name="Hata H."/>
            <person name="Watanabe M."/>
            <person name="Komatsu T."/>
            <person name="Mizushima-Sugano J."/>
            <person name="Satoh T."/>
            <person name="Shirai Y."/>
            <person name="Takahashi Y."/>
            <person name="Nakagawa K."/>
            <person name="Okumura K."/>
            <person name="Nagase T."/>
            <person name="Nomura N."/>
            <person name="Kikuchi H."/>
            <person name="Masuho Y."/>
            <person name="Yamashita R."/>
            <person name="Nakai K."/>
            <person name="Yada T."/>
            <person name="Nakamura Y."/>
            <person name="Ohara O."/>
            <person name="Isogai T."/>
            <person name="Sugano S."/>
        </authorList>
    </citation>
    <scope>NUCLEOTIDE SEQUENCE [LARGE SCALE MRNA] (ISOFORMS 1 AND 3)</scope>
</reference>
<reference key="4">
    <citation type="journal article" date="2003" name="Nature">
        <title>The DNA sequence of human chromosome 7.</title>
        <authorList>
            <person name="Hillier L.W."/>
            <person name="Fulton R.S."/>
            <person name="Fulton L.A."/>
            <person name="Graves T.A."/>
            <person name="Pepin K.H."/>
            <person name="Wagner-McPherson C."/>
            <person name="Layman D."/>
            <person name="Maas J."/>
            <person name="Jaeger S."/>
            <person name="Walker R."/>
            <person name="Wylie K."/>
            <person name="Sekhon M."/>
            <person name="Becker M.C."/>
            <person name="O'Laughlin M.D."/>
            <person name="Schaller M.E."/>
            <person name="Fewell G.A."/>
            <person name="Delehaunty K.D."/>
            <person name="Miner T.L."/>
            <person name="Nash W.E."/>
            <person name="Cordes M."/>
            <person name="Du H."/>
            <person name="Sun H."/>
            <person name="Edwards J."/>
            <person name="Bradshaw-Cordum H."/>
            <person name="Ali J."/>
            <person name="Andrews S."/>
            <person name="Isak A."/>
            <person name="Vanbrunt A."/>
            <person name="Nguyen C."/>
            <person name="Du F."/>
            <person name="Lamar B."/>
            <person name="Courtney L."/>
            <person name="Kalicki J."/>
            <person name="Ozersky P."/>
            <person name="Bielicki L."/>
            <person name="Scott K."/>
            <person name="Holmes A."/>
            <person name="Harkins R."/>
            <person name="Harris A."/>
            <person name="Strong C.M."/>
            <person name="Hou S."/>
            <person name="Tomlinson C."/>
            <person name="Dauphin-Kohlberg S."/>
            <person name="Kozlowicz-Reilly A."/>
            <person name="Leonard S."/>
            <person name="Rohlfing T."/>
            <person name="Rock S.M."/>
            <person name="Tin-Wollam A.-M."/>
            <person name="Abbott A."/>
            <person name="Minx P."/>
            <person name="Maupin R."/>
            <person name="Strowmatt C."/>
            <person name="Latreille P."/>
            <person name="Miller N."/>
            <person name="Johnson D."/>
            <person name="Murray J."/>
            <person name="Woessner J.P."/>
            <person name="Wendl M.C."/>
            <person name="Yang S.-P."/>
            <person name="Schultz B.R."/>
            <person name="Wallis J.W."/>
            <person name="Spieth J."/>
            <person name="Bieri T.A."/>
            <person name="Nelson J.O."/>
            <person name="Berkowicz N."/>
            <person name="Wohldmann P.E."/>
            <person name="Cook L.L."/>
            <person name="Hickenbotham M.T."/>
            <person name="Eldred J."/>
            <person name="Williams D."/>
            <person name="Bedell J.A."/>
            <person name="Mardis E.R."/>
            <person name="Clifton S.W."/>
            <person name="Chissoe S.L."/>
            <person name="Marra M.A."/>
            <person name="Raymond C."/>
            <person name="Haugen E."/>
            <person name="Gillett W."/>
            <person name="Zhou Y."/>
            <person name="James R."/>
            <person name="Phelps K."/>
            <person name="Iadanoto S."/>
            <person name="Bubb K."/>
            <person name="Simms E."/>
            <person name="Levy R."/>
            <person name="Clendenning J."/>
            <person name="Kaul R."/>
            <person name="Kent W.J."/>
            <person name="Furey T.S."/>
            <person name="Baertsch R.A."/>
            <person name="Brent M.R."/>
            <person name="Keibler E."/>
            <person name="Flicek P."/>
            <person name="Bork P."/>
            <person name="Suyama M."/>
            <person name="Bailey J.A."/>
            <person name="Portnoy M.E."/>
            <person name="Torrents D."/>
            <person name="Chinwalla A.T."/>
            <person name="Gish W.R."/>
            <person name="Eddy S.R."/>
            <person name="McPherson J.D."/>
            <person name="Olson M.V."/>
            <person name="Eichler E.E."/>
            <person name="Green E.D."/>
            <person name="Waterston R.H."/>
            <person name="Wilson R.K."/>
        </authorList>
    </citation>
    <scope>NUCLEOTIDE SEQUENCE [LARGE SCALE GENOMIC DNA]</scope>
</reference>
<reference key="5">
    <citation type="submission" date="2005-07" db="EMBL/GenBank/DDBJ databases">
        <authorList>
            <person name="Mural R.J."/>
            <person name="Istrail S."/>
            <person name="Sutton G.G."/>
            <person name="Florea L."/>
            <person name="Halpern A.L."/>
            <person name="Mobarry C.M."/>
            <person name="Lippert R."/>
            <person name="Walenz B."/>
            <person name="Shatkay H."/>
            <person name="Dew I."/>
            <person name="Miller J.R."/>
            <person name="Flanigan M.J."/>
            <person name="Edwards N.J."/>
            <person name="Bolanos R."/>
            <person name="Fasulo D."/>
            <person name="Halldorsson B.V."/>
            <person name="Hannenhalli S."/>
            <person name="Turner R."/>
            <person name="Yooseph S."/>
            <person name="Lu F."/>
            <person name="Nusskern D.R."/>
            <person name="Shue B.C."/>
            <person name="Zheng X.H."/>
            <person name="Zhong F."/>
            <person name="Delcher A.L."/>
            <person name="Huson D.H."/>
            <person name="Kravitz S.A."/>
            <person name="Mouchard L."/>
            <person name="Reinert K."/>
            <person name="Remington K.A."/>
            <person name="Clark A.G."/>
            <person name="Waterman M.S."/>
            <person name="Eichler E.E."/>
            <person name="Adams M.D."/>
            <person name="Hunkapiller M.W."/>
            <person name="Myers E.W."/>
            <person name="Venter J.C."/>
        </authorList>
    </citation>
    <scope>NUCLEOTIDE SEQUENCE [LARGE SCALE GENOMIC DNA]</scope>
</reference>
<reference key="6">
    <citation type="journal article" date="2004" name="Genome Res.">
        <title>The status, quality, and expansion of the NIH full-length cDNA project: the Mammalian Gene Collection (MGC).</title>
        <authorList>
            <consortium name="The MGC Project Team"/>
        </authorList>
    </citation>
    <scope>NUCLEOTIDE SEQUENCE [LARGE SCALE MRNA] (ISOFORM 1)</scope>
    <source>
        <tissue>Cervix</tissue>
    </source>
</reference>
<reference key="7">
    <citation type="submission" date="1999-11" db="EMBL/GenBank/DDBJ databases">
        <title>Genes that are differentially expressed in colon cancer.</title>
        <authorList>
            <person name="Nimmrich I."/>
            <person name="Erdmann S."/>
            <person name="Melchers U."/>
        </authorList>
    </citation>
    <scope>NUCLEOTIDE SEQUENCE [MRNA] OF 51-224 (ISOFORM 1)</scope>
</reference>
<reference key="8">
    <citation type="journal article" date="2009" name="J. Proteome Res.">
        <title>Glycoproteomics analysis of human liver tissue by combination of multiple enzyme digestion and hydrazide chemistry.</title>
        <authorList>
            <person name="Chen R."/>
            <person name="Jiang X."/>
            <person name="Sun D."/>
            <person name="Han G."/>
            <person name="Wang F."/>
            <person name="Ye M."/>
            <person name="Wang L."/>
            <person name="Zou H."/>
        </authorList>
    </citation>
    <scope>GLYCOSYLATION [LARGE SCALE ANALYSIS] AT ASN-130</scope>
    <source>
        <tissue>Liver</tissue>
    </source>
</reference>
<reference key="9">
    <citation type="journal article" date="2015" name="Proteomics">
        <title>N-terminome analysis of the human mitochondrial proteome.</title>
        <authorList>
            <person name="Vaca Jacome A.S."/>
            <person name="Rabilloud T."/>
            <person name="Schaeffer-Reiss C."/>
            <person name="Rompais M."/>
            <person name="Ayoub D."/>
            <person name="Lane L."/>
            <person name="Bairoch A."/>
            <person name="Van Dorsselaer A."/>
            <person name="Carapito C."/>
        </authorList>
    </citation>
    <scope>IDENTIFICATION BY MASS SPECTROMETRY [LARGE SCALE ANALYSIS]</scope>
</reference>
<reference key="10">
    <citation type="journal article" date="2019" name="Commun. Biol.">
        <title>Crystal structures of human lysosomal EPDR1 reveal homology with the superfamily of bacterial lipoprotein transporters.</title>
        <authorList>
            <person name="Wei Y."/>
            <person name="Xiong Z.J."/>
            <person name="Li J."/>
            <person name="Zou C."/>
            <person name="Cairo C.W."/>
            <person name="Klassen J.S."/>
            <person name="Prive G.G."/>
        </authorList>
    </citation>
    <scope>X-RAY CRYSTALLOGRAPHY (3.0 ANGSTROMS) OF 38-224</scope>
    <scope>SUBUNIT</scope>
    <scope>SUBCELLULAR LOCATION</scope>
    <scope>GLYCOSYLATION AT ASN-130</scope>
    <scope>DISULFIDE BOND</scope>
</reference>
<feature type="signal peptide" evidence="2">
    <location>
        <begin position="1"/>
        <end position="37"/>
    </location>
</feature>
<feature type="chain" id="PRO_0000008351" description="Mammalian ependymin-related protein 1">
    <location>
        <begin position="38"/>
        <end position="224"/>
    </location>
</feature>
<feature type="glycosylation site" description="N-linked (GlcNAc...) asparagine" evidence="4 5">
    <location>
        <position position="130"/>
    </location>
</feature>
<feature type="glycosylation site" description="N-linked (GlcNAc...) asparagine" evidence="2">
    <location>
        <position position="182"/>
    </location>
</feature>
<feature type="disulfide bond" evidence="5">
    <location>
        <begin position="42"/>
        <end position="172"/>
    </location>
</feature>
<feature type="disulfide bond" evidence="5">
    <location>
        <begin position="88"/>
        <end position="222"/>
    </location>
</feature>
<feature type="disulfide bond" evidence="5">
    <location>
        <begin position="113"/>
        <end position="210"/>
    </location>
</feature>
<feature type="splice variant" id="VSP_046829" description="In isoform 3." evidence="7">
    <original>MPGRAPLRTVPGALGAWLLGGLWAWTLCGLCSLGAVGAPRPCQAPQQWEGRQVMYQQSSGRNSRALLSYDGLNQRVRVLDERKALIPCK</original>
    <variation>MVRDWEGRCAHRGRPAGGGLSNTQRGGG</variation>
    <location>
        <begin position="1"/>
        <end position="89"/>
    </location>
</feature>
<feature type="splice variant" id="VSP_031976" description="In isoform 2." evidence="8">
    <location>
        <begin position="91"/>
        <end position="224"/>
    </location>
</feature>
<feature type="sequence conflict" description="In Ref. 7; CAB60269." evidence="9" ref="7">
    <original>P</original>
    <variation>S</variation>
    <location>
        <position position="207"/>
    </location>
</feature>
<feature type="strand" evidence="11">
    <location>
        <begin position="46"/>
        <end position="56"/>
    </location>
</feature>
<feature type="turn" evidence="11">
    <location>
        <begin position="57"/>
        <end position="59"/>
    </location>
</feature>
<feature type="strand" evidence="11">
    <location>
        <begin position="62"/>
        <end position="70"/>
    </location>
</feature>
<feature type="turn" evidence="11">
    <location>
        <begin position="71"/>
        <end position="74"/>
    </location>
</feature>
<feature type="strand" evidence="11">
    <location>
        <begin position="75"/>
        <end position="80"/>
    </location>
</feature>
<feature type="strand" evidence="10">
    <location>
        <begin position="83"/>
        <end position="87"/>
    </location>
</feature>
<feature type="strand" evidence="11">
    <location>
        <begin position="92"/>
        <end position="97"/>
    </location>
</feature>
<feature type="helix" evidence="11">
    <location>
        <begin position="98"/>
        <end position="100"/>
    </location>
</feature>
<feature type="strand" evidence="11">
    <location>
        <begin position="102"/>
        <end position="107"/>
    </location>
</feature>
<feature type="turn" evidence="11">
    <location>
        <begin position="108"/>
        <end position="110"/>
    </location>
</feature>
<feature type="strand" evidence="11">
    <location>
        <begin position="113"/>
        <end position="117"/>
    </location>
</feature>
<feature type="strand" evidence="11">
    <location>
        <begin position="132"/>
        <end position="140"/>
    </location>
</feature>
<feature type="turn" evidence="11">
    <location>
        <begin position="142"/>
        <end position="144"/>
    </location>
</feature>
<feature type="strand" evidence="11">
    <location>
        <begin position="146"/>
        <end position="152"/>
    </location>
</feature>
<feature type="turn" evidence="10">
    <location>
        <begin position="157"/>
        <end position="160"/>
    </location>
</feature>
<feature type="strand" evidence="11">
    <location>
        <begin position="162"/>
        <end position="168"/>
    </location>
</feature>
<feature type="turn" evidence="11">
    <location>
        <begin position="169"/>
        <end position="171"/>
    </location>
</feature>
<feature type="strand" evidence="11">
    <location>
        <begin position="174"/>
        <end position="181"/>
    </location>
</feature>
<feature type="strand" evidence="11">
    <location>
        <begin position="184"/>
        <end position="197"/>
    </location>
</feature>
<feature type="helix" evidence="11">
    <location>
        <begin position="201"/>
        <end position="204"/>
    </location>
</feature>
<feature type="helix" evidence="11">
    <location>
        <begin position="208"/>
        <end position="210"/>
    </location>
</feature>
<feature type="strand" evidence="11">
    <location>
        <begin position="214"/>
        <end position="216"/>
    </location>
</feature>
<sequence length="224" mass="25437">MPGRAPLRTVPGALGAWLLGGLWAWTLCGLCSLGAVGAPRPCQAPQQWEGRQVMYQQSSGRNSRALLSYDGLNQRVRVLDERKALIPCKRLFEYILLYKDGVMFQIDQATKQCSKMTLTQPWDPLDIPQNSTFEDQYSIGGPQEQITVQEWSDRKSARSYETWIGIYTVKDCYPVQETFTINYSVILSTRFFDIQLGIKDPSVFTPPSTCQMAQLEKMSEDCSW</sequence>
<evidence type="ECO:0000250" key="1">
    <source>
        <dbReference type="UniProtKB" id="Q99M71"/>
    </source>
</evidence>
<evidence type="ECO:0000255" key="2"/>
<evidence type="ECO:0000269" key="3">
    <source>
    </source>
</evidence>
<evidence type="ECO:0000269" key="4">
    <source>
    </source>
</evidence>
<evidence type="ECO:0000269" key="5">
    <source>
    </source>
</evidence>
<evidence type="ECO:0000303" key="6">
    <source>
    </source>
</evidence>
<evidence type="ECO:0000303" key="7">
    <source>
    </source>
</evidence>
<evidence type="ECO:0000303" key="8">
    <source ref="2"/>
</evidence>
<evidence type="ECO:0000305" key="9"/>
<evidence type="ECO:0007829" key="10">
    <source>
        <dbReference type="PDB" id="6E8N"/>
    </source>
</evidence>
<evidence type="ECO:0007829" key="11">
    <source>
        <dbReference type="PDB" id="6JLD"/>
    </source>
</evidence>
<proteinExistence type="evidence at protein level"/>
<gene>
    <name type="primary">EPDR1</name>
    <name type="synonym">MERP1</name>
    <name type="synonym">UCC1</name>
</gene>
<dbReference type="EMBL" id="AF361252">
    <property type="protein sequence ID" value="AAK26441.1"/>
    <property type="molecule type" value="Genomic_DNA"/>
</dbReference>
<dbReference type="EMBL" id="AY027861">
    <property type="protein sequence ID" value="AAK15787.1"/>
    <property type="molecule type" value="mRNA"/>
</dbReference>
<dbReference type="EMBL" id="DQ914439">
    <property type="protein sequence ID" value="ABI84106.1"/>
    <property type="molecule type" value="mRNA"/>
</dbReference>
<dbReference type="EMBL" id="AK290885">
    <property type="protein sequence ID" value="BAF83574.1"/>
    <property type="molecule type" value="mRNA"/>
</dbReference>
<dbReference type="EMBL" id="AK309180">
    <property type="status" value="NOT_ANNOTATED_CDS"/>
    <property type="molecule type" value="mRNA"/>
</dbReference>
<dbReference type="EMBL" id="AC018634">
    <property type="status" value="NOT_ANNOTATED_CDS"/>
    <property type="molecule type" value="Genomic_DNA"/>
</dbReference>
<dbReference type="EMBL" id="AC083860">
    <property type="status" value="NOT_ANNOTATED_CDS"/>
    <property type="molecule type" value="Genomic_DNA"/>
</dbReference>
<dbReference type="EMBL" id="AC083865">
    <property type="status" value="NOT_ANNOTATED_CDS"/>
    <property type="molecule type" value="Genomic_DNA"/>
</dbReference>
<dbReference type="EMBL" id="CH471073">
    <property type="protein sequence ID" value="EAW94086.1"/>
    <property type="molecule type" value="Genomic_DNA"/>
</dbReference>
<dbReference type="EMBL" id="BC000686">
    <property type="protein sequence ID" value="AAH00686.2"/>
    <property type="status" value="ALT_INIT"/>
    <property type="molecule type" value="mRNA"/>
</dbReference>
<dbReference type="EMBL" id="BC018299">
    <property type="protein sequence ID" value="AAH18299.1"/>
    <property type="molecule type" value="mRNA"/>
</dbReference>
<dbReference type="EMBL" id="AJ250475">
    <property type="protein sequence ID" value="CAB60269.1"/>
    <property type="status" value="ALT_INIT"/>
    <property type="molecule type" value="mRNA"/>
</dbReference>
<dbReference type="CCDS" id="CCDS5454.2">
    <molecule id="Q9UM22-1"/>
</dbReference>
<dbReference type="CCDS" id="CCDS59051.1">
    <molecule id="Q9UM22-2"/>
</dbReference>
<dbReference type="CCDS" id="CCDS59052.1">
    <molecule id="Q9UM22-3"/>
</dbReference>
<dbReference type="RefSeq" id="NP_001229875.2">
    <molecule id="Q9UM22-2"/>
    <property type="nucleotide sequence ID" value="NM_001242946.2"/>
</dbReference>
<dbReference type="RefSeq" id="NP_001229877.1">
    <molecule id="Q9UM22-3"/>
    <property type="nucleotide sequence ID" value="NM_001242948.2"/>
</dbReference>
<dbReference type="RefSeq" id="NP_060019.2">
    <molecule id="Q9UM22-1"/>
    <property type="nucleotide sequence ID" value="NM_017549.5"/>
</dbReference>
<dbReference type="PDB" id="6E7O">
    <property type="method" value="X-ray"/>
    <property type="resolution" value="3.00 A"/>
    <property type="chains" value="A/B/C/D=38-224"/>
</dbReference>
<dbReference type="PDB" id="6E8N">
    <property type="method" value="X-ray"/>
    <property type="resolution" value="3.20 A"/>
    <property type="chains" value="A/B=38-224"/>
</dbReference>
<dbReference type="PDB" id="6JLD">
    <property type="method" value="X-ray"/>
    <property type="resolution" value="2.00 A"/>
    <property type="chains" value="A/B/C/D=38-224"/>
</dbReference>
<dbReference type="PDBsum" id="6E7O"/>
<dbReference type="PDBsum" id="6E8N"/>
<dbReference type="PDBsum" id="6JLD"/>
<dbReference type="SMR" id="Q9UM22"/>
<dbReference type="BioGRID" id="120127">
    <property type="interactions" value="90"/>
</dbReference>
<dbReference type="FunCoup" id="Q9UM22">
    <property type="interactions" value="388"/>
</dbReference>
<dbReference type="IntAct" id="Q9UM22">
    <property type="interactions" value="72"/>
</dbReference>
<dbReference type="STRING" id="9606.ENSP00000199448"/>
<dbReference type="GlyCosmos" id="Q9UM22">
    <property type="glycosylation" value="4 sites, 1 glycan"/>
</dbReference>
<dbReference type="GlyGen" id="Q9UM22">
    <property type="glycosylation" value="4 sites, 1 N-linked glycan (1 site), 1 O-linked glycan (2 sites)"/>
</dbReference>
<dbReference type="iPTMnet" id="Q9UM22"/>
<dbReference type="MetOSite" id="Q9UM22"/>
<dbReference type="PhosphoSitePlus" id="Q9UM22"/>
<dbReference type="SwissPalm" id="Q9UM22"/>
<dbReference type="BioMuta" id="EPDR1"/>
<dbReference type="DMDM" id="13124620"/>
<dbReference type="jPOST" id="Q9UM22"/>
<dbReference type="MassIVE" id="Q9UM22"/>
<dbReference type="PaxDb" id="9606-ENSP00000199448"/>
<dbReference type="PeptideAtlas" id="Q9UM22"/>
<dbReference type="ProteomicsDB" id="12296"/>
<dbReference type="ProteomicsDB" id="85173">
    <molecule id="Q9UM22-1"/>
</dbReference>
<dbReference type="ProteomicsDB" id="85174">
    <molecule id="Q9UM22-2"/>
</dbReference>
<dbReference type="Pumba" id="Q9UM22"/>
<dbReference type="Antibodypedia" id="34976">
    <property type="antibodies" value="181 antibodies from 20 providers"/>
</dbReference>
<dbReference type="DNASU" id="54749"/>
<dbReference type="Ensembl" id="ENST00000199448.9">
    <molecule id="Q9UM22-1"/>
    <property type="protein sequence ID" value="ENSP00000199448.4"/>
    <property type="gene ID" value="ENSG00000086289.13"/>
</dbReference>
<dbReference type="Ensembl" id="ENST00000423717.1">
    <molecule id="Q9UM22-2"/>
    <property type="protein sequence ID" value="ENSP00000409211.1"/>
    <property type="gene ID" value="ENSG00000086289.13"/>
</dbReference>
<dbReference type="Ensembl" id="ENST00000425345.1">
    <molecule id="Q9UM22-3"/>
    <property type="protein sequence ID" value="ENSP00000413359.1"/>
    <property type="gene ID" value="ENSG00000086289.13"/>
</dbReference>
<dbReference type="GeneID" id="54749"/>
<dbReference type="KEGG" id="hsa:54749"/>
<dbReference type="MANE-Select" id="ENST00000199448.9">
    <property type="protein sequence ID" value="ENSP00000199448.4"/>
    <property type="RefSeq nucleotide sequence ID" value="NM_017549.5"/>
    <property type="RefSeq protein sequence ID" value="NP_060019.2"/>
</dbReference>
<dbReference type="UCSC" id="uc003tfp.5">
    <molecule id="Q9UM22-1"/>
    <property type="organism name" value="human"/>
</dbReference>
<dbReference type="AGR" id="HGNC:17572"/>
<dbReference type="CTD" id="54749"/>
<dbReference type="DisGeNET" id="54749"/>
<dbReference type="GeneCards" id="EPDR1"/>
<dbReference type="HGNC" id="HGNC:17572">
    <property type="gene designation" value="EPDR1"/>
</dbReference>
<dbReference type="HPA" id="ENSG00000086289">
    <property type="expression patterns" value="Tissue enhanced (skeletal)"/>
</dbReference>
<dbReference type="MIM" id="619734">
    <property type="type" value="gene"/>
</dbReference>
<dbReference type="neXtProt" id="NX_Q9UM22"/>
<dbReference type="NIAGADS" id="ENSG00000086289"/>
<dbReference type="OpenTargets" id="ENSG00000086289"/>
<dbReference type="PharmGKB" id="PA142671908"/>
<dbReference type="VEuPathDB" id="HostDB:ENSG00000086289"/>
<dbReference type="eggNOG" id="ENOG502QQ8T">
    <property type="taxonomic scope" value="Eukaryota"/>
</dbReference>
<dbReference type="GeneTree" id="ENSGT00940000164413"/>
<dbReference type="HOGENOM" id="CLU_097673_0_0_1"/>
<dbReference type="InParanoid" id="Q9UM22"/>
<dbReference type="OMA" id="TMKDCYP"/>
<dbReference type="PAN-GO" id="Q9UM22">
    <property type="GO annotations" value="1 GO annotation based on evolutionary models"/>
</dbReference>
<dbReference type="PhylomeDB" id="Q9UM22"/>
<dbReference type="PathwayCommons" id="Q9UM22"/>
<dbReference type="SignaLink" id="Q9UM22"/>
<dbReference type="BioGRID-ORCS" id="54749">
    <property type="hits" value="7 hits in 1134 CRISPR screens"/>
</dbReference>
<dbReference type="ChiTaRS" id="EPDR1">
    <property type="organism name" value="human"/>
</dbReference>
<dbReference type="GenomeRNAi" id="54749"/>
<dbReference type="Pharos" id="Q9UM22">
    <property type="development level" value="Tbio"/>
</dbReference>
<dbReference type="PRO" id="PR:Q9UM22"/>
<dbReference type="Proteomes" id="UP000005640">
    <property type="component" value="Chromosome 7"/>
</dbReference>
<dbReference type="RNAct" id="Q9UM22">
    <property type="molecule type" value="protein"/>
</dbReference>
<dbReference type="Bgee" id="ENSG00000086289">
    <property type="expression patterns" value="Expressed in pons and 176 other cell types or tissues"/>
</dbReference>
<dbReference type="ExpressionAtlas" id="Q9UM22">
    <property type="expression patterns" value="baseline and differential"/>
</dbReference>
<dbReference type="GO" id="GO:0005576">
    <property type="term" value="C:extracellular region"/>
    <property type="evidence" value="ECO:0000314"/>
    <property type="project" value="UniProtKB"/>
</dbReference>
<dbReference type="GO" id="GO:0043202">
    <property type="term" value="C:lysosomal lumen"/>
    <property type="evidence" value="ECO:0007669"/>
    <property type="project" value="UniProtKB-SubCell"/>
</dbReference>
<dbReference type="GO" id="GO:0005764">
    <property type="term" value="C:lysosome"/>
    <property type="evidence" value="ECO:0000314"/>
    <property type="project" value="UniProtKB"/>
</dbReference>
<dbReference type="GO" id="GO:0005509">
    <property type="term" value="F:calcium ion binding"/>
    <property type="evidence" value="ECO:0007669"/>
    <property type="project" value="InterPro"/>
</dbReference>
<dbReference type="GO" id="GO:1905573">
    <property type="term" value="F:ganglioside GM1 binding"/>
    <property type="evidence" value="ECO:0000314"/>
    <property type="project" value="UniProtKB"/>
</dbReference>
<dbReference type="GO" id="GO:0042802">
    <property type="term" value="F:identical protein binding"/>
    <property type="evidence" value="ECO:0000314"/>
    <property type="project" value="UniProtKB"/>
</dbReference>
<dbReference type="GO" id="GO:0005543">
    <property type="term" value="F:phospholipid binding"/>
    <property type="evidence" value="ECO:0000353"/>
    <property type="project" value="UniProtKB"/>
</dbReference>
<dbReference type="GO" id="GO:0007160">
    <property type="term" value="P:cell-matrix adhesion"/>
    <property type="evidence" value="ECO:0007669"/>
    <property type="project" value="InterPro"/>
</dbReference>
<dbReference type="GO" id="GO:1990764">
    <property type="term" value="P:myofibroblast contraction"/>
    <property type="evidence" value="ECO:0000315"/>
    <property type="project" value="UniProtKB"/>
</dbReference>
<dbReference type="InterPro" id="IPR001299">
    <property type="entry name" value="Ependymin"/>
</dbReference>
<dbReference type="InterPro" id="IPR018224">
    <property type="entry name" value="Ependymin_CS"/>
</dbReference>
<dbReference type="PANTHER" id="PTHR10697">
    <property type="entry name" value="MAMMALIAN EPENDYMIN-RELATED PROTEIN 1"/>
    <property type="match status" value="1"/>
</dbReference>
<dbReference type="PANTHER" id="PTHR10697:SF1">
    <property type="entry name" value="MAMMALIAN EPENDYMIN-RELATED PROTEIN 1"/>
    <property type="match status" value="1"/>
</dbReference>
<dbReference type="Pfam" id="PF00811">
    <property type="entry name" value="Ependymin"/>
    <property type="match status" value="1"/>
</dbReference>
<dbReference type="PRINTS" id="PR00317">
    <property type="entry name" value="EPENDYMIN"/>
</dbReference>
<dbReference type="SMART" id="SM00026">
    <property type="entry name" value="EPEND"/>
    <property type="match status" value="1"/>
</dbReference>
<dbReference type="PROSITE" id="PS00898">
    <property type="entry name" value="EPENDYMIN_1"/>
    <property type="match status" value="1"/>
</dbReference>
<dbReference type="PROSITE" id="PS00899">
    <property type="entry name" value="EPENDYMIN_2"/>
    <property type="match status" value="1"/>
</dbReference>